<evidence type="ECO:0000255" key="1">
    <source>
        <dbReference type="HAMAP-Rule" id="MF_00434"/>
    </source>
</evidence>
<evidence type="ECO:0000269" key="2">
    <source>
    </source>
</evidence>
<comment type="catalytic activity">
    <reaction evidence="1">
        <text>(4aS,6R)-4a-hydroxy-L-erythro-5,6,7,8-tetrahydrobiopterin = (6R)-L-erythro-6,7-dihydrobiopterin + H2O</text>
        <dbReference type="Rhea" id="RHEA:11920"/>
        <dbReference type="ChEBI" id="CHEBI:15377"/>
        <dbReference type="ChEBI" id="CHEBI:15642"/>
        <dbReference type="ChEBI" id="CHEBI:43120"/>
        <dbReference type="EC" id="4.2.1.96"/>
    </reaction>
</comment>
<comment type="similarity">
    <text evidence="1">Belongs to the pterin-4-alpha-carbinolamine dehydratase family.</text>
</comment>
<proteinExistence type="evidence at protein level"/>
<sequence length="118" mass="13333">MTALTQAHCEACRADAPHVSDEELPVLLRQIPDWNIEVRDGIMQLEKVYLFKNFKHALAFTNAVGEISEAEGHHPGLLTEWGKVTVTWWSHSIKGLHRNDFIMAARTDEVAKTAEGRK</sequence>
<keyword id="KW-0456">Lyase</keyword>
<keyword id="KW-0597">Phosphoprotein</keyword>
<gene>
    <name type="ordered locus">PA14_53000</name>
</gene>
<feature type="initiator methionine" description="Removed" evidence="2">
    <location>
        <position position="1"/>
    </location>
</feature>
<feature type="chain" id="PRO_1000050436" description="Putative pterin-4-alpha-carbinolamine dehydratase">
    <location>
        <begin position="2"/>
        <end position="118"/>
    </location>
</feature>
<feature type="modified residue" description="Phosphothreonine" evidence="2">
    <location>
        <position position="2"/>
    </location>
</feature>
<name>PHS_PSEAB</name>
<accession>Q02I31</accession>
<organism>
    <name type="scientific">Pseudomonas aeruginosa (strain UCBPP-PA14)</name>
    <dbReference type="NCBI Taxonomy" id="208963"/>
    <lineage>
        <taxon>Bacteria</taxon>
        <taxon>Pseudomonadati</taxon>
        <taxon>Pseudomonadota</taxon>
        <taxon>Gammaproteobacteria</taxon>
        <taxon>Pseudomonadales</taxon>
        <taxon>Pseudomonadaceae</taxon>
        <taxon>Pseudomonas</taxon>
    </lineage>
</organism>
<reference key="1">
    <citation type="journal article" date="2006" name="Genome Biol.">
        <title>Genomic analysis reveals that Pseudomonas aeruginosa virulence is combinatorial.</title>
        <authorList>
            <person name="Lee D.G."/>
            <person name="Urbach J.M."/>
            <person name="Wu G."/>
            <person name="Liberati N.T."/>
            <person name="Feinbaum R.L."/>
            <person name="Miyata S."/>
            <person name="Diggins L.T."/>
            <person name="He J."/>
            <person name="Saucier M."/>
            <person name="Deziel E."/>
            <person name="Friedman L."/>
            <person name="Li L."/>
            <person name="Grills G."/>
            <person name="Montgomery K."/>
            <person name="Kucherlapati R."/>
            <person name="Rahme L.G."/>
            <person name="Ausubel F.M."/>
        </authorList>
    </citation>
    <scope>NUCLEOTIDE SEQUENCE [LARGE SCALE GENOMIC DNA]</scope>
    <source>
        <strain>UCBPP-PA14</strain>
    </source>
</reference>
<reference key="2">
    <citation type="journal article" date="2014" name="Anal. Bioanal. Chem.">
        <title>Potential of liquid-isoelectric-focusing protein fractionation to improve phosphoprotein characterization of Pseudomonas aeruginosa PA14.</title>
        <authorList>
            <person name="Ouidir T."/>
            <person name="Jarnier F."/>
            <person name="Cosette P."/>
            <person name="Jouenne T."/>
            <person name="Hardouin J."/>
        </authorList>
    </citation>
    <scope>IDENTIFICATION BY MASS SPECTROMETRY</scope>
    <scope>CLEAVAGE OF INITIATOR METHIONINE</scope>
    <scope>PHOSPHORYLATION AT THR-2</scope>
    <source>
        <strain>UCBPP-PA14</strain>
    </source>
</reference>
<protein>
    <recommendedName>
        <fullName evidence="1">Putative pterin-4-alpha-carbinolamine dehydratase</fullName>
        <shortName evidence="1">PHS</shortName>
        <ecNumber evidence="1">4.2.1.96</ecNumber>
    </recommendedName>
    <alternativeName>
        <fullName evidence="1">4-alpha-hydroxy-tetrahydropterin dehydratase</fullName>
    </alternativeName>
    <alternativeName>
        <fullName evidence="1">Pterin carbinolamine dehydratase</fullName>
        <shortName evidence="1">PCD</shortName>
    </alternativeName>
</protein>
<dbReference type="EC" id="4.2.1.96" evidence="1"/>
<dbReference type="EMBL" id="CP000438">
    <property type="protein sequence ID" value="ABJ10031.1"/>
    <property type="molecule type" value="Genomic_DNA"/>
</dbReference>
<dbReference type="RefSeq" id="WP_003085898.1">
    <property type="nucleotide sequence ID" value="NZ_CP034244.1"/>
</dbReference>
<dbReference type="SMR" id="Q02I31"/>
<dbReference type="iPTMnet" id="Q02I31"/>
<dbReference type="KEGG" id="pau:PA14_53000"/>
<dbReference type="PseudoCAP" id="PA14_53000"/>
<dbReference type="HOGENOM" id="CLU_081974_2_2_6"/>
<dbReference type="BioCyc" id="PAER208963:G1G74-4461-MONOMER"/>
<dbReference type="Proteomes" id="UP000000653">
    <property type="component" value="Chromosome"/>
</dbReference>
<dbReference type="GO" id="GO:0008124">
    <property type="term" value="F:4-alpha-hydroxytetrahydrobiopterin dehydratase activity"/>
    <property type="evidence" value="ECO:0007669"/>
    <property type="project" value="UniProtKB-UniRule"/>
</dbReference>
<dbReference type="GO" id="GO:0006729">
    <property type="term" value="P:tetrahydrobiopterin biosynthetic process"/>
    <property type="evidence" value="ECO:0007669"/>
    <property type="project" value="InterPro"/>
</dbReference>
<dbReference type="CDD" id="cd00913">
    <property type="entry name" value="PCD_DCoH_subfamily_a"/>
    <property type="match status" value="1"/>
</dbReference>
<dbReference type="Gene3D" id="3.30.1360.20">
    <property type="entry name" value="Transcriptional coactivator/pterin dehydratase"/>
    <property type="match status" value="1"/>
</dbReference>
<dbReference type="HAMAP" id="MF_00434">
    <property type="entry name" value="Pterin_4_alpha"/>
    <property type="match status" value="1"/>
</dbReference>
<dbReference type="InterPro" id="IPR036428">
    <property type="entry name" value="PCD_sf"/>
</dbReference>
<dbReference type="InterPro" id="IPR050376">
    <property type="entry name" value="Pterin-4-alpha-carb_dehyd"/>
</dbReference>
<dbReference type="InterPro" id="IPR001533">
    <property type="entry name" value="Pterin_deHydtase"/>
</dbReference>
<dbReference type="NCBIfam" id="NF002016">
    <property type="entry name" value="PRK00823.1-1"/>
    <property type="match status" value="1"/>
</dbReference>
<dbReference type="PANTHER" id="PTHR42805">
    <property type="entry name" value="PTERIN-4-ALPHA-CARBINOLAMINE DEHYDRATASE-RELATED"/>
    <property type="match status" value="1"/>
</dbReference>
<dbReference type="PANTHER" id="PTHR42805:SF1">
    <property type="entry name" value="PTERIN-4-ALPHA-CARBINOLAMINE DEHYDRATASE-RELATED"/>
    <property type="match status" value="1"/>
</dbReference>
<dbReference type="Pfam" id="PF01329">
    <property type="entry name" value="Pterin_4a"/>
    <property type="match status" value="1"/>
</dbReference>
<dbReference type="SUPFAM" id="SSF55248">
    <property type="entry name" value="PCD-like"/>
    <property type="match status" value="1"/>
</dbReference>